<name>OLIG3_HUMAN</name>
<reference key="1">
    <citation type="journal article" date="2004" name="Nat. Genet.">
        <title>Complete sequencing and characterization of 21,243 full-length human cDNAs.</title>
        <authorList>
            <person name="Ota T."/>
            <person name="Suzuki Y."/>
            <person name="Nishikawa T."/>
            <person name="Otsuki T."/>
            <person name="Sugiyama T."/>
            <person name="Irie R."/>
            <person name="Wakamatsu A."/>
            <person name="Hayashi K."/>
            <person name="Sato H."/>
            <person name="Nagai K."/>
            <person name="Kimura K."/>
            <person name="Makita H."/>
            <person name="Sekine M."/>
            <person name="Obayashi M."/>
            <person name="Nishi T."/>
            <person name="Shibahara T."/>
            <person name="Tanaka T."/>
            <person name="Ishii S."/>
            <person name="Yamamoto J."/>
            <person name="Saito K."/>
            <person name="Kawai Y."/>
            <person name="Isono Y."/>
            <person name="Nakamura Y."/>
            <person name="Nagahari K."/>
            <person name="Murakami K."/>
            <person name="Yasuda T."/>
            <person name="Iwayanagi T."/>
            <person name="Wagatsuma M."/>
            <person name="Shiratori A."/>
            <person name="Sudo H."/>
            <person name="Hosoiri T."/>
            <person name="Kaku Y."/>
            <person name="Kodaira H."/>
            <person name="Kondo H."/>
            <person name="Sugawara M."/>
            <person name="Takahashi M."/>
            <person name="Kanda K."/>
            <person name="Yokoi T."/>
            <person name="Furuya T."/>
            <person name="Kikkawa E."/>
            <person name="Omura Y."/>
            <person name="Abe K."/>
            <person name="Kamihara K."/>
            <person name="Katsuta N."/>
            <person name="Sato K."/>
            <person name="Tanikawa M."/>
            <person name="Yamazaki M."/>
            <person name="Ninomiya K."/>
            <person name="Ishibashi T."/>
            <person name="Yamashita H."/>
            <person name="Murakawa K."/>
            <person name="Fujimori K."/>
            <person name="Tanai H."/>
            <person name="Kimata M."/>
            <person name="Watanabe M."/>
            <person name="Hiraoka S."/>
            <person name="Chiba Y."/>
            <person name="Ishida S."/>
            <person name="Ono Y."/>
            <person name="Takiguchi S."/>
            <person name="Watanabe S."/>
            <person name="Yosida M."/>
            <person name="Hotuta T."/>
            <person name="Kusano J."/>
            <person name="Kanehori K."/>
            <person name="Takahashi-Fujii A."/>
            <person name="Hara H."/>
            <person name="Tanase T.-O."/>
            <person name="Nomura Y."/>
            <person name="Togiya S."/>
            <person name="Komai F."/>
            <person name="Hara R."/>
            <person name="Takeuchi K."/>
            <person name="Arita M."/>
            <person name="Imose N."/>
            <person name="Musashino K."/>
            <person name="Yuuki H."/>
            <person name="Oshima A."/>
            <person name="Sasaki N."/>
            <person name="Aotsuka S."/>
            <person name="Yoshikawa Y."/>
            <person name="Matsunawa H."/>
            <person name="Ichihara T."/>
            <person name="Shiohata N."/>
            <person name="Sano S."/>
            <person name="Moriya S."/>
            <person name="Momiyama H."/>
            <person name="Satoh N."/>
            <person name="Takami S."/>
            <person name="Terashima Y."/>
            <person name="Suzuki O."/>
            <person name="Nakagawa S."/>
            <person name="Senoh A."/>
            <person name="Mizoguchi H."/>
            <person name="Goto Y."/>
            <person name="Shimizu F."/>
            <person name="Wakebe H."/>
            <person name="Hishigaki H."/>
            <person name="Watanabe T."/>
            <person name="Sugiyama A."/>
            <person name="Takemoto M."/>
            <person name="Kawakami B."/>
            <person name="Yamazaki M."/>
            <person name="Watanabe K."/>
            <person name="Kumagai A."/>
            <person name="Itakura S."/>
            <person name="Fukuzumi Y."/>
            <person name="Fujimori Y."/>
            <person name="Komiyama M."/>
            <person name="Tashiro H."/>
            <person name="Tanigami A."/>
            <person name="Fujiwara T."/>
            <person name="Ono T."/>
            <person name="Yamada K."/>
            <person name="Fujii Y."/>
            <person name="Ozaki K."/>
            <person name="Hirao M."/>
            <person name="Ohmori Y."/>
            <person name="Kawabata A."/>
            <person name="Hikiji T."/>
            <person name="Kobatake N."/>
            <person name="Inagaki H."/>
            <person name="Ikema Y."/>
            <person name="Okamoto S."/>
            <person name="Okitani R."/>
            <person name="Kawakami T."/>
            <person name="Noguchi S."/>
            <person name="Itoh T."/>
            <person name="Shigeta K."/>
            <person name="Senba T."/>
            <person name="Matsumura K."/>
            <person name="Nakajima Y."/>
            <person name="Mizuno T."/>
            <person name="Morinaga M."/>
            <person name="Sasaki M."/>
            <person name="Togashi T."/>
            <person name="Oyama M."/>
            <person name="Hata H."/>
            <person name="Watanabe M."/>
            <person name="Komatsu T."/>
            <person name="Mizushima-Sugano J."/>
            <person name="Satoh T."/>
            <person name="Shirai Y."/>
            <person name="Takahashi Y."/>
            <person name="Nakagawa K."/>
            <person name="Okumura K."/>
            <person name="Nagase T."/>
            <person name="Nomura N."/>
            <person name="Kikuchi H."/>
            <person name="Masuho Y."/>
            <person name="Yamashita R."/>
            <person name="Nakai K."/>
            <person name="Yada T."/>
            <person name="Nakamura Y."/>
            <person name="Ohara O."/>
            <person name="Isogai T."/>
            <person name="Sugano S."/>
        </authorList>
    </citation>
    <scope>NUCLEOTIDE SEQUENCE [LARGE SCALE MRNA]</scope>
</reference>
<reference key="2">
    <citation type="journal article" date="2003" name="Nature">
        <title>The DNA sequence and analysis of human chromosome 6.</title>
        <authorList>
            <person name="Mungall A.J."/>
            <person name="Palmer S.A."/>
            <person name="Sims S.K."/>
            <person name="Edwards C.A."/>
            <person name="Ashurst J.L."/>
            <person name="Wilming L."/>
            <person name="Jones M.C."/>
            <person name="Horton R."/>
            <person name="Hunt S.E."/>
            <person name="Scott C.E."/>
            <person name="Gilbert J.G.R."/>
            <person name="Clamp M.E."/>
            <person name="Bethel G."/>
            <person name="Milne S."/>
            <person name="Ainscough R."/>
            <person name="Almeida J.P."/>
            <person name="Ambrose K.D."/>
            <person name="Andrews T.D."/>
            <person name="Ashwell R.I.S."/>
            <person name="Babbage A.K."/>
            <person name="Bagguley C.L."/>
            <person name="Bailey J."/>
            <person name="Banerjee R."/>
            <person name="Barker D.J."/>
            <person name="Barlow K.F."/>
            <person name="Bates K."/>
            <person name="Beare D.M."/>
            <person name="Beasley H."/>
            <person name="Beasley O."/>
            <person name="Bird C.P."/>
            <person name="Blakey S.E."/>
            <person name="Bray-Allen S."/>
            <person name="Brook J."/>
            <person name="Brown A.J."/>
            <person name="Brown J.Y."/>
            <person name="Burford D.C."/>
            <person name="Burrill W."/>
            <person name="Burton J."/>
            <person name="Carder C."/>
            <person name="Carter N.P."/>
            <person name="Chapman J.C."/>
            <person name="Clark S.Y."/>
            <person name="Clark G."/>
            <person name="Clee C.M."/>
            <person name="Clegg S."/>
            <person name="Cobley V."/>
            <person name="Collier R.E."/>
            <person name="Collins J.E."/>
            <person name="Colman L.K."/>
            <person name="Corby N.R."/>
            <person name="Coville G.J."/>
            <person name="Culley K.M."/>
            <person name="Dhami P."/>
            <person name="Davies J."/>
            <person name="Dunn M."/>
            <person name="Earthrowl M.E."/>
            <person name="Ellington A.E."/>
            <person name="Evans K.A."/>
            <person name="Faulkner L."/>
            <person name="Francis M.D."/>
            <person name="Frankish A."/>
            <person name="Frankland J."/>
            <person name="French L."/>
            <person name="Garner P."/>
            <person name="Garnett J."/>
            <person name="Ghori M.J."/>
            <person name="Gilby L.M."/>
            <person name="Gillson C.J."/>
            <person name="Glithero R.J."/>
            <person name="Grafham D.V."/>
            <person name="Grant M."/>
            <person name="Gribble S."/>
            <person name="Griffiths C."/>
            <person name="Griffiths M.N.D."/>
            <person name="Hall R."/>
            <person name="Halls K.S."/>
            <person name="Hammond S."/>
            <person name="Harley J.L."/>
            <person name="Hart E.A."/>
            <person name="Heath P.D."/>
            <person name="Heathcott R."/>
            <person name="Holmes S.J."/>
            <person name="Howden P.J."/>
            <person name="Howe K.L."/>
            <person name="Howell G.R."/>
            <person name="Huckle E."/>
            <person name="Humphray S.J."/>
            <person name="Humphries M.D."/>
            <person name="Hunt A.R."/>
            <person name="Johnson C.M."/>
            <person name="Joy A.A."/>
            <person name="Kay M."/>
            <person name="Keenan S.J."/>
            <person name="Kimberley A.M."/>
            <person name="King A."/>
            <person name="Laird G.K."/>
            <person name="Langford C."/>
            <person name="Lawlor S."/>
            <person name="Leongamornlert D.A."/>
            <person name="Leversha M."/>
            <person name="Lloyd C.R."/>
            <person name="Lloyd D.M."/>
            <person name="Loveland J.E."/>
            <person name="Lovell J."/>
            <person name="Martin S."/>
            <person name="Mashreghi-Mohammadi M."/>
            <person name="Maslen G.L."/>
            <person name="Matthews L."/>
            <person name="McCann O.T."/>
            <person name="McLaren S.J."/>
            <person name="McLay K."/>
            <person name="McMurray A."/>
            <person name="Moore M.J.F."/>
            <person name="Mullikin J.C."/>
            <person name="Niblett D."/>
            <person name="Nickerson T."/>
            <person name="Novik K.L."/>
            <person name="Oliver K."/>
            <person name="Overton-Larty E.K."/>
            <person name="Parker A."/>
            <person name="Patel R."/>
            <person name="Pearce A.V."/>
            <person name="Peck A.I."/>
            <person name="Phillimore B.J.C.T."/>
            <person name="Phillips S."/>
            <person name="Plumb R.W."/>
            <person name="Porter K.M."/>
            <person name="Ramsey Y."/>
            <person name="Ranby S.A."/>
            <person name="Rice C.M."/>
            <person name="Ross M.T."/>
            <person name="Searle S.M."/>
            <person name="Sehra H.K."/>
            <person name="Sheridan E."/>
            <person name="Skuce C.D."/>
            <person name="Smith S."/>
            <person name="Smith M."/>
            <person name="Spraggon L."/>
            <person name="Squares S.L."/>
            <person name="Steward C.A."/>
            <person name="Sycamore N."/>
            <person name="Tamlyn-Hall G."/>
            <person name="Tester J."/>
            <person name="Theaker A.J."/>
            <person name="Thomas D.W."/>
            <person name="Thorpe A."/>
            <person name="Tracey A."/>
            <person name="Tromans A."/>
            <person name="Tubby B."/>
            <person name="Wall M."/>
            <person name="Wallis J.M."/>
            <person name="West A.P."/>
            <person name="White S.S."/>
            <person name="Whitehead S.L."/>
            <person name="Whittaker H."/>
            <person name="Wild A."/>
            <person name="Willey D.J."/>
            <person name="Wilmer T.E."/>
            <person name="Wood J.M."/>
            <person name="Wray P.W."/>
            <person name="Wyatt J.C."/>
            <person name="Young L."/>
            <person name="Younger R.M."/>
            <person name="Bentley D.R."/>
            <person name="Coulson A."/>
            <person name="Durbin R.M."/>
            <person name="Hubbard T."/>
            <person name="Sulston J.E."/>
            <person name="Dunham I."/>
            <person name="Rogers J."/>
            <person name="Beck S."/>
        </authorList>
    </citation>
    <scope>NUCLEOTIDE SEQUENCE [LARGE SCALE GENOMIC DNA]</scope>
</reference>
<reference key="3">
    <citation type="journal article" date="2004" name="Genome Res.">
        <title>The status, quality, and expansion of the NIH full-length cDNA project: the Mammalian Gene Collection (MGC).</title>
        <authorList>
            <consortium name="The MGC Project Team"/>
        </authorList>
    </citation>
    <scope>NUCLEOTIDE SEQUENCE [LARGE SCALE MRNA]</scope>
    <source>
        <tissue>Ovary</tissue>
    </source>
</reference>
<reference key="4">
    <citation type="journal article" date="2002" name="Mech. Dev.">
        <title>Exhaustive identification of human class II basic helix-loop-helix proteins by virtual library screening.</title>
        <authorList>
            <person name="McLellan A.S."/>
            <person name="Langlands K."/>
            <person name="Kealey T."/>
        </authorList>
    </citation>
    <scope>IDENTIFICATION</scope>
</reference>
<gene>
    <name type="primary">OLIG3</name>
    <name type="synonym">BHLHB7</name>
    <name type="synonym">BHLHE20</name>
</gene>
<feature type="chain" id="PRO_0000127417" description="Oligodendrocyte transcription factor 3">
    <location>
        <begin position="1"/>
        <end position="272"/>
    </location>
</feature>
<feature type="domain" description="bHLH" evidence="2">
    <location>
        <begin position="83"/>
        <end position="137"/>
    </location>
</feature>
<feature type="region of interest" description="Disordered" evidence="3">
    <location>
        <begin position="1"/>
        <end position="71"/>
    </location>
</feature>
<feature type="coiled-coil region" evidence="1">
    <location>
        <begin position="68"/>
        <end position="89"/>
    </location>
</feature>
<feature type="compositionally biased region" description="Low complexity" evidence="3">
    <location>
        <begin position="1"/>
        <end position="14"/>
    </location>
</feature>
<feature type="compositionally biased region" description="Basic residues" evidence="3">
    <location>
        <begin position="24"/>
        <end position="33"/>
    </location>
</feature>
<feature type="compositionally biased region" description="Polar residues" evidence="3">
    <location>
        <begin position="36"/>
        <end position="46"/>
    </location>
</feature>
<sequence length="272" mass="29358">MNSDSSSVSSRASSPDMDEMYLRDHHHRHHHHQESRLNSVSSTQGDMMQKMPGESLSRAGAKAAGESSKYKIKKQLSEQDLQQLRLKINGRERKRMHDLNLAMDGLREVMPYAHGPSVRKLSKIATLLLARNYILMLTSSLEEMKRLVGEIYGGHHSAFHCGTVGHSAGHPAHAANSVHPVHPILGGALSSGNASSPLSAASLPAIGTIRPPHSLLKAPSTPPALQLGSGFQHWAGLPCPCTICQMPPPPHLSALSTANMARLSAESKDLLK</sequence>
<keyword id="KW-0175">Coiled coil</keyword>
<keyword id="KW-0238">DNA-binding</keyword>
<keyword id="KW-0539">Nucleus</keyword>
<keyword id="KW-1185">Reference proteome</keyword>
<keyword id="KW-0804">Transcription</keyword>
<keyword id="KW-0805">Transcription regulation</keyword>
<organism>
    <name type="scientific">Homo sapiens</name>
    <name type="common">Human</name>
    <dbReference type="NCBI Taxonomy" id="9606"/>
    <lineage>
        <taxon>Eukaryota</taxon>
        <taxon>Metazoa</taxon>
        <taxon>Chordata</taxon>
        <taxon>Craniata</taxon>
        <taxon>Vertebrata</taxon>
        <taxon>Euteleostomi</taxon>
        <taxon>Mammalia</taxon>
        <taxon>Eutheria</taxon>
        <taxon>Euarchontoglires</taxon>
        <taxon>Primates</taxon>
        <taxon>Haplorrhini</taxon>
        <taxon>Catarrhini</taxon>
        <taxon>Hominidae</taxon>
        <taxon>Homo</taxon>
    </lineage>
</organism>
<proteinExistence type="evidence at protein level"/>
<accession>Q7RTU3</accession>
<accession>Q8N8Q0</accession>
<dbReference type="EMBL" id="AK096362">
    <property type="protein sequence ID" value="BAC04768.1"/>
    <property type="molecule type" value="mRNA"/>
</dbReference>
<dbReference type="EMBL" id="AL023580">
    <property type="status" value="NOT_ANNOTATED_CDS"/>
    <property type="molecule type" value="Genomic_DNA"/>
</dbReference>
<dbReference type="EMBL" id="BC051352">
    <property type="protein sequence ID" value="AAH51352.1"/>
    <property type="molecule type" value="mRNA"/>
</dbReference>
<dbReference type="EMBL" id="BK000141">
    <property type="protein sequence ID" value="DAA00303.1"/>
    <property type="status" value="ALT_INIT"/>
    <property type="molecule type" value="Genomic_DNA"/>
</dbReference>
<dbReference type="CCDS" id="CCDS5186.1"/>
<dbReference type="RefSeq" id="NP_786923.1">
    <property type="nucleotide sequence ID" value="NM_175747.2"/>
</dbReference>
<dbReference type="SMR" id="Q7RTU3"/>
<dbReference type="BioGRID" id="127951">
    <property type="interactions" value="33"/>
</dbReference>
<dbReference type="FunCoup" id="Q7RTU3">
    <property type="interactions" value="663"/>
</dbReference>
<dbReference type="IntAct" id="Q7RTU3">
    <property type="interactions" value="30"/>
</dbReference>
<dbReference type="STRING" id="9606.ENSP00000356708"/>
<dbReference type="GlyGen" id="Q7RTU3">
    <property type="glycosylation" value="1 site, 1 O-linked glycan (1 site)"/>
</dbReference>
<dbReference type="iPTMnet" id="Q7RTU3"/>
<dbReference type="PhosphoSitePlus" id="Q7RTU3"/>
<dbReference type="BioMuta" id="OLIG3"/>
<dbReference type="DMDM" id="51701664"/>
<dbReference type="MassIVE" id="Q7RTU3"/>
<dbReference type="PaxDb" id="9606-ENSP00000356708"/>
<dbReference type="PeptideAtlas" id="Q7RTU3"/>
<dbReference type="ProteomicsDB" id="68906"/>
<dbReference type="Antibodypedia" id="19782">
    <property type="antibodies" value="193 antibodies from 30 providers"/>
</dbReference>
<dbReference type="DNASU" id="167826"/>
<dbReference type="Ensembl" id="ENST00000367734.4">
    <property type="protein sequence ID" value="ENSP00000356708.2"/>
    <property type="gene ID" value="ENSG00000177468.7"/>
</dbReference>
<dbReference type="GeneID" id="167826"/>
<dbReference type="KEGG" id="hsa:167826"/>
<dbReference type="MANE-Select" id="ENST00000367734.4">
    <property type="protein sequence ID" value="ENSP00000356708.2"/>
    <property type="RefSeq nucleotide sequence ID" value="NM_175747.2"/>
    <property type="RefSeq protein sequence ID" value="NP_786923.1"/>
</dbReference>
<dbReference type="UCSC" id="uc003qhp.2">
    <property type="organism name" value="human"/>
</dbReference>
<dbReference type="AGR" id="HGNC:18003"/>
<dbReference type="CTD" id="167826"/>
<dbReference type="DisGeNET" id="167826"/>
<dbReference type="GeneCards" id="OLIG3"/>
<dbReference type="HGNC" id="HGNC:18003">
    <property type="gene designation" value="OLIG3"/>
</dbReference>
<dbReference type="HPA" id="ENSG00000177468">
    <property type="expression patterns" value="Not detected"/>
</dbReference>
<dbReference type="MIM" id="609323">
    <property type="type" value="gene"/>
</dbReference>
<dbReference type="neXtProt" id="NX_Q7RTU3"/>
<dbReference type="OpenTargets" id="ENSG00000177468"/>
<dbReference type="PharmGKB" id="PA134945348"/>
<dbReference type="VEuPathDB" id="HostDB:ENSG00000177468"/>
<dbReference type="eggNOG" id="KOG3898">
    <property type="taxonomic scope" value="Eukaryota"/>
</dbReference>
<dbReference type="GeneTree" id="ENSGT00940000160850"/>
<dbReference type="HOGENOM" id="CLU_065376_1_0_1"/>
<dbReference type="InParanoid" id="Q7RTU3"/>
<dbReference type="OMA" id="SICQVPP"/>
<dbReference type="OrthoDB" id="10011855at2759"/>
<dbReference type="PAN-GO" id="Q7RTU3">
    <property type="GO annotations" value="5 GO annotations based on evolutionary models"/>
</dbReference>
<dbReference type="PhylomeDB" id="Q7RTU3"/>
<dbReference type="TreeFam" id="TF322733"/>
<dbReference type="PathwayCommons" id="Q7RTU3"/>
<dbReference type="SignaLink" id="Q7RTU3"/>
<dbReference type="BioGRID-ORCS" id="167826">
    <property type="hits" value="11 hits in 1156 CRISPR screens"/>
</dbReference>
<dbReference type="ChiTaRS" id="OLIG3">
    <property type="organism name" value="human"/>
</dbReference>
<dbReference type="GenomeRNAi" id="167826"/>
<dbReference type="Pharos" id="Q7RTU3">
    <property type="development level" value="Tbio"/>
</dbReference>
<dbReference type="PRO" id="PR:Q7RTU3"/>
<dbReference type="Proteomes" id="UP000005640">
    <property type="component" value="Chromosome 6"/>
</dbReference>
<dbReference type="RNAct" id="Q7RTU3">
    <property type="molecule type" value="protein"/>
</dbReference>
<dbReference type="Bgee" id="ENSG00000177468">
    <property type="expression patterns" value="Expressed in islet of Langerhans and 8 other cell types or tissues"/>
</dbReference>
<dbReference type="GO" id="GO:0000785">
    <property type="term" value="C:chromatin"/>
    <property type="evidence" value="ECO:0000247"/>
    <property type="project" value="NTNU_SB"/>
</dbReference>
<dbReference type="GO" id="GO:0005634">
    <property type="term" value="C:nucleus"/>
    <property type="evidence" value="ECO:0000318"/>
    <property type="project" value="GO_Central"/>
</dbReference>
<dbReference type="GO" id="GO:0000981">
    <property type="term" value="F:DNA-binding transcription factor activity, RNA polymerase II-specific"/>
    <property type="evidence" value="ECO:0000247"/>
    <property type="project" value="NTNU_SB"/>
</dbReference>
<dbReference type="GO" id="GO:0070888">
    <property type="term" value="F:E-box binding"/>
    <property type="evidence" value="ECO:0000318"/>
    <property type="project" value="GO_Central"/>
</dbReference>
<dbReference type="GO" id="GO:0046983">
    <property type="term" value="F:protein dimerization activity"/>
    <property type="evidence" value="ECO:0007669"/>
    <property type="project" value="InterPro"/>
</dbReference>
<dbReference type="GO" id="GO:1990837">
    <property type="term" value="F:sequence-specific double-stranded DNA binding"/>
    <property type="evidence" value="ECO:0000314"/>
    <property type="project" value="ARUK-UCL"/>
</dbReference>
<dbReference type="GO" id="GO:0061564">
    <property type="term" value="P:axon development"/>
    <property type="evidence" value="ECO:0000318"/>
    <property type="project" value="GO_Central"/>
</dbReference>
<dbReference type="GO" id="GO:0000122">
    <property type="term" value="P:negative regulation of transcription by RNA polymerase II"/>
    <property type="evidence" value="ECO:0007669"/>
    <property type="project" value="Ensembl"/>
</dbReference>
<dbReference type="GO" id="GO:0045944">
    <property type="term" value="P:positive regulation of transcription by RNA polymerase II"/>
    <property type="evidence" value="ECO:0000318"/>
    <property type="project" value="GO_Central"/>
</dbReference>
<dbReference type="GO" id="GO:0007423">
    <property type="term" value="P:sensory organ development"/>
    <property type="evidence" value="ECO:0000318"/>
    <property type="project" value="GO_Central"/>
</dbReference>
<dbReference type="GO" id="GO:0021520">
    <property type="term" value="P:spinal cord motor neuron cell fate specification"/>
    <property type="evidence" value="ECO:0007669"/>
    <property type="project" value="Ensembl"/>
</dbReference>
<dbReference type="GO" id="GO:0097476">
    <property type="term" value="P:spinal cord motor neuron migration"/>
    <property type="evidence" value="ECO:0007669"/>
    <property type="project" value="Ensembl"/>
</dbReference>
<dbReference type="CDD" id="cd18941">
    <property type="entry name" value="bHLH_TS_OLIG3"/>
    <property type="match status" value="1"/>
</dbReference>
<dbReference type="FunFam" id="4.10.280.10:FF:000031">
    <property type="entry name" value="Oligodendrocyte transcription factor 3"/>
    <property type="match status" value="1"/>
</dbReference>
<dbReference type="Gene3D" id="4.10.280.10">
    <property type="entry name" value="Helix-loop-helix DNA-binding domain"/>
    <property type="match status" value="1"/>
</dbReference>
<dbReference type="InterPro" id="IPR011598">
    <property type="entry name" value="bHLH_dom"/>
</dbReference>
<dbReference type="InterPro" id="IPR050359">
    <property type="entry name" value="bHLH_transcription_factors"/>
</dbReference>
<dbReference type="InterPro" id="IPR036638">
    <property type="entry name" value="HLH_DNA-bd_sf"/>
</dbReference>
<dbReference type="InterPro" id="IPR032659">
    <property type="entry name" value="Olig3_bHLH"/>
</dbReference>
<dbReference type="PANTHER" id="PTHR19290">
    <property type="entry name" value="BASIC HELIX-LOOP-HELIX PROTEIN NEUROGENIN-RELATED"/>
    <property type="match status" value="1"/>
</dbReference>
<dbReference type="PANTHER" id="PTHR19290:SF96">
    <property type="entry name" value="OLIGODENDROCYTE TRANSCRIPTION FACTOR 3"/>
    <property type="match status" value="1"/>
</dbReference>
<dbReference type="Pfam" id="PF00010">
    <property type="entry name" value="HLH"/>
    <property type="match status" value="1"/>
</dbReference>
<dbReference type="SMART" id="SM00353">
    <property type="entry name" value="HLH"/>
    <property type="match status" value="1"/>
</dbReference>
<dbReference type="SUPFAM" id="SSF47459">
    <property type="entry name" value="HLH, helix-loop-helix DNA-binding domain"/>
    <property type="match status" value="1"/>
</dbReference>
<dbReference type="PROSITE" id="PS50888">
    <property type="entry name" value="BHLH"/>
    <property type="match status" value="1"/>
</dbReference>
<protein>
    <recommendedName>
        <fullName>Oligodendrocyte transcription factor 3</fullName>
        <shortName>Oligo3</shortName>
    </recommendedName>
    <alternativeName>
        <fullName>Class B basic helix-loop-helix protein 7</fullName>
        <shortName>bHLHb7</shortName>
    </alternativeName>
    <alternativeName>
        <fullName>Class E basic helix-loop-helix protein 20</fullName>
        <shortName>bHLHe20</shortName>
    </alternativeName>
</protein>
<evidence type="ECO:0000255" key="1"/>
<evidence type="ECO:0000255" key="2">
    <source>
        <dbReference type="PROSITE-ProRule" id="PRU00981"/>
    </source>
</evidence>
<evidence type="ECO:0000256" key="3">
    <source>
        <dbReference type="SAM" id="MobiDB-lite"/>
    </source>
</evidence>
<evidence type="ECO:0000305" key="4"/>
<comment type="function">
    <text>May determine the distinct specification program of class A neurons in the dorsal part of the spinal cord and suppress specification of class B neurons.</text>
</comment>
<comment type="interaction">
    <interactant intactId="EBI-10225049">
        <id>Q7RTU3</id>
    </interactant>
    <interactant intactId="EBI-541426">
        <id>Q9BXS5</id>
        <label>AP1M1</label>
    </interactant>
    <organismsDiffer>false</organismsDiffer>
    <experiments>3</experiments>
</comment>
<comment type="interaction">
    <interactant intactId="EBI-10225049">
        <id>Q7RTU3</id>
    </interactant>
    <interactant intactId="EBI-948603">
        <id>Q03989</id>
        <label>ARID5A</label>
    </interactant>
    <organismsDiffer>false</organismsDiffer>
    <experiments>4</experiments>
</comment>
<comment type="interaction">
    <interactant intactId="EBI-10225049">
        <id>Q7RTU3</id>
    </interactant>
    <interactant intactId="EBI-11954292">
        <id>Q86V38</id>
        <label>ATN1</label>
    </interactant>
    <organismsDiffer>false</organismsDiffer>
    <experiments>3</experiments>
</comment>
<comment type="interaction">
    <interactant intactId="EBI-10225049">
        <id>Q7RTU3</id>
    </interactant>
    <interactant intactId="EBI-358049">
        <id>Q13895</id>
        <label>BYSL</label>
    </interactant>
    <organismsDiffer>false</organismsDiffer>
    <experiments>5</experiments>
</comment>
<comment type="interaction">
    <interactant intactId="EBI-10225049">
        <id>Q7RTU3</id>
    </interactant>
    <interactant intactId="EBI-10179719">
        <id>A2RRN7</id>
        <label>CADPS</label>
    </interactant>
    <organismsDiffer>false</organismsDiffer>
    <experiments>3</experiments>
</comment>
<comment type="interaction">
    <interactant intactId="EBI-10225049">
        <id>Q7RTU3</id>
    </interactant>
    <interactant intactId="EBI-3866279">
        <id>Q9BWT7</id>
        <label>CARD10</label>
    </interactant>
    <organismsDiffer>false</organismsDiffer>
    <experiments>3</experiments>
</comment>
<comment type="interaction">
    <interactant intactId="EBI-10225049">
        <id>Q7RTU3</id>
    </interactant>
    <interactant intactId="EBI-3867333">
        <id>A8MQ03</id>
        <label>CYSRT1</label>
    </interactant>
    <organismsDiffer>false</organismsDiffer>
    <experiments>3</experiments>
</comment>
<comment type="interaction">
    <interactant intactId="EBI-10225049">
        <id>Q7RTU3</id>
    </interactant>
    <interactant intactId="EBI-10976677">
        <id>G5E9A7</id>
        <label>DMWD</label>
    </interactant>
    <organismsDiffer>false</organismsDiffer>
    <experiments>3</experiments>
</comment>
<comment type="interaction">
    <interactant intactId="EBI-10225049">
        <id>Q7RTU3</id>
    </interactant>
    <interactant intactId="EBI-740641">
        <id>Q9NP66</id>
        <label>HMG20A</label>
    </interactant>
    <organismsDiffer>false</organismsDiffer>
    <experiments>3</experiments>
</comment>
<comment type="interaction">
    <interactant intactId="EBI-10225049">
        <id>Q7RTU3</id>
    </interactant>
    <interactant intactId="EBI-9996498">
        <id>O43790</id>
        <label>KRT86</label>
    </interactant>
    <organismsDiffer>false</organismsDiffer>
    <experiments>3</experiments>
</comment>
<comment type="interaction">
    <interactant intactId="EBI-10225049">
        <id>Q7RTU3</id>
    </interactant>
    <interactant intactId="EBI-11959885">
        <id>Q07627</id>
        <label>KRTAP1-1</label>
    </interactant>
    <organismsDiffer>false</organismsDiffer>
    <experiments>3</experiments>
</comment>
<comment type="interaction">
    <interactant intactId="EBI-10225049">
        <id>Q7RTU3</id>
    </interactant>
    <interactant intactId="EBI-10171774">
        <id>P60410</id>
        <label>KRTAP10-8</label>
    </interactant>
    <organismsDiffer>false</organismsDiffer>
    <experiments>5</experiments>
</comment>
<comment type="interaction">
    <interactant intactId="EBI-10225049">
        <id>Q7RTU3</id>
    </interactant>
    <interactant intactId="EBI-1052037">
        <id>Q8IUC1</id>
        <label>KRTAP11-1</label>
    </interactant>
    <organismsDiffer>false</organismsDiffer>
    <experiments>3</experiments>
</comment>
<comment type="interaction">
    <interactant intactId="EBI-10225049">
        <id>Q7RTU3</id>
    </interactant>
    <interactant intactId="EBI-12196745">
        <id>Q3LHN2</id>
        <label>KRTAP19-2</label>
    </interactant>
    <organismsDiffer>false</organismsDiffer>
    <experiments>3</experiments>
</comment>
<comment type="interaction">
    <interactant intactId="EBI-10225049">
        <id>Q7RTU3</id>
    </interactant>
    <interactant intactId="EBI-1048945">
        <id>Q3LI72</id>
        <label>KRTAP19-5</label>
    </interactant>
    <organismsDiffer>false</organismsDiffer>
    <experiments>3</experiments>
</comment>
<comment type="interaction">
    <interactant intactId="EBI-10225049">
        <id>Q7RTU3</id>
    </interactant>
    <interactant intactId="EBI-751260">
        <id>Q9BYR7</id>
        <label>KRTAP3-2</label>
    </interactant>
    <organismsDiffer>false</organismsDiffer>
    <experiments>3</experiments>
</comment>
<comment type="interaction">
    <interactant intactId="EBI-10225049">
        <id>Q7RTU3</id>
    </interactant>
    <interactant intactId="EBI-3957694">
        <id>Q9BYR6</id>
        <label>KRTAP3-3</label>
    </interactant>
    <organismsDiffer>false</organismsDiffer>
    <experiments>3</experiments>
</comment>
<comment type="interaction">
    <interactant intactId="EBI-10225049">
        <id>Q7RTU3</id>
    </interactant>
    <interactant intactId="EBI-12111050">
        <id>Q3LI64</id>
        <label>KRTAP6-1</label>
    </interactant>
    <organismsDiffer>false</organismsDiffer>
    <experiments>3</experiments>
</comment>
<comment type="interaction">
    <interactant intactId="EBI-10225049">
        <id>Q7RTU3</id>
    </interactant>
    <interactant intactId="EBI-11962084">
        <id>Q3LI66</id>
        <label>KRTAP6-2</label>
    </interactant>
    <organismsDiffer>false</organismsDiffer>
    <experiments>3</experiments>
</comment>
<comment type="interaction">
    <interactant intactId="EBI-10225049">
        <id>Q7RTU3</id>
    </interactant>
    <interactant intactId="EBI-22311199">
        <id>Q3LI67</id>
        <label>KRTAP6-3</label>
    </interactant>
    <organismsDiffer>false</organismsDiffer>
    <experiments>3</experiments>
</comment>
<comment type="interaction">
    <interactant intactId="EBI-10225049">
        <id>Q7RTU3</id>
    </interactant>
    <interactant intactId="EBI-11958364">
        <id>Q9BYQ0</id>
        <label>KRTAP9-8</label>
    </interactant>
    <organismsDiffer>false</organismsDiffer>
    <experiments>3</experiments>
</comment>
<comment type="interaction">
    <interactant intactId="EBI-10225049">
        <id>Q7RTU3</id>
    </interactant>
    <interactant intactId="EBI-724076">
        <id>Q99750</id>
        <label>MDFI</label>
    </interactant>
    <organismsDiffer>false</organismsDiffer>
    <experiments>6</experiments>
</comment>
<comment type="interaction">
    <interactant intactId="EBI-10225049">
        <id>Q7RTU3</id>
    </interactant>
    <interactant intactId="EBI-1048159">
        <id>P55081</id>
        <label>MFAP1</label>
    </interactant>
    <organismsDiffer>false</organismsDiffer>
    <experiments>3</experiments>
</comment>
<comment type="interaction">
    <interactant intactId="EBI-10225049">
        <id>Q7RTU3</id>
    </interactant>
    <interactant intactId="EBI-2876622">
        <id>Q9UPG8</id>
        <label>PLAGL2</label>
    </interactant>
    <organismsDiffer>false</organismsDiffer>
    <experiments>3</experiments>
</comment>
<comment type="interaction">
    <interactant intactId="EBI-10225049">
        <id>Q7RTU3</id>
    </interactant>
    <interactant intactId="EBI-9027467">
        <id>O75360</id>
        <label>PROP1</label>
    </interactant>
    <organismsDiffer>false</organismsDiffer>
    <experiments>3</experiments>
</comment>
<comment type="interaction">
    <interactant intactId="EBI-10225049">
        <id>Q7RTU3</id>
    </interactant>
    <interactant intactId="EBI-12001422">
        <id>Q01196-8</id>
        <label>RUNX1</label>
    </interactant>
    <organismsDiffer>false</organismsDiffer>
    <experiments>3</experiments>
</comment>
<comment type="interaction">
    <interactant intactId="EBI-10225049">
        <id>Q7RTU3</id>
    </interactant>
    <interactant intactId="EBI-5235340">
        <id>Q7Z699</id>
        <label>SPRED1</label>
    </interactant>
    <organismsDiffer>false</organismsDiffer>
    <experiments>3</experiments>
</comment>
<comment type="interaction">
    <interactant intactId="EBI-10225049">
        <id>Q7RTU3</id>
    </interactant>
    <interactant intactId="EBI-717810">
        <id>Q08117</id>
        <label>TLE5</label>
    </interactant>
    <organismsDiffer>false</organismsDiffer>
    <experiments>3</experiments>
</comment>
<comment type="interaction">
    <interactant intactId="EBI-10225049">
        <id>Q7RTU3</id>
    </interactant>
    <interactant intactId="EBI-11741437">
        <id>Q08117-2</id>
        <label>TLE5</label>
    </interactant>
    <organismsDiffer>false</organismsDiffer>
    <experiments>5</experiments>
</comment>
<comment type="interaction">
    <interactant intactId="EBI-10225049">
        <id>Q7RTU3</id>
    </interactant>
    <interactant intactId="EBI-359224">
        <id>Q13077</id>
        <label>TRAF1</label>
    </interactant>
    <organismsDiffer>false</organismsDiffer>
    <experiments>6</experiments>
</comment>
<comment type="interaction">
    <interactant intactId="EBI-10225049">
        <id>Q7RTU3</id>
    </interactant>
    <interactant intactId="EBI-12040603">
        <id>Q9NZC7-5</id>
        <label>WWOX</label>
    </interactant>
    <organismsDiffer>false</organismsDiffer>
    <experiments>3</experiments>
</comment>
<comment type="subcellular location">
    <subcellularLocation>
        <location evidence="2">Nucleus</location>
    </subcellularLocation>
</comment>
<comment type="sequence caution" evidence="4">
    <conflict type="erroneous initiation">
        <sequence resource="EMBL-CDS" id="DAA00303"/>
    </conflict>
</comment>